<proteinExistence type="evidence at protein level"/>
<evidence type="ECO:0000250" key="1"/>
<evidence type="ECO:0000305" key="2"/>
<evidence type="ECO:0007829" key="3">
    <source>
        <dbReference type="PDB" id="6S6C"/>
    </source>
</evidence>
<sequence>MDPIALQAGYDLLGDGRPETLWLGIGTLLMLIGTFYFLVRGWGVTDKDAREYYAVTILVPGIASAAYLSMFFGIGLTEVTVGGEMLDIYYARYADWLFTTPLLLLDLALLAKVDRVTIGTLVGVDALMIVTGLIGALSHTAIARYSWWLFSTICMIVVLYFLATSLRSAAKERGPEVASTFNTLTALVLVLWTAYPILWIIGTEGAGVVGLGIETLLFMVLDVTAKVGFGFILLRSRAILGDTEAPEPSAGADVSAAD</sequence>
<accession>P96787</accession>
<name>BACR3_HALSD</name>
<organism>
    <name type="scientific">Halorubrum sodomense</name>
    <dbReference type="NCBI Taxonomy" id="35743"/>
    <lineage>
        <taxon>Archaea</taxon>
        <taxon>Methanobacteriati</taxon>
        <taxon>Methanobacteriota</taxon>
        <taxon>Stenosarchaea group</taxon>
        <taxon>Halobacteria</taxon>
        <taxon>Halobacteriales</taxon>
        <taxon>Haloferacaceae</taxon>
        <taxon>Halorubrum</taxon>
    </lineage>
</organism>
<reference key="1">
    <citation type="journal article" date="1999" name="J. Mol. Biol.">
        <title>Evolution of the archaeal rhodopsins: evolution rate changes by gene duplication and functional differentiation.</title>
        <authorList>
            <person name="Ihara K."/>
            <person name="Umemura T."/>
            <person name="Katagiri I."/>
            <person name="Kitajima-Ihara T."/>
            <person name="Sugiyama Y."/>
            <person name="Kimura Y."/>
            <person name="Mukohata Y."/>
        </authorList>
    </citation>
    <scope>NUCLEOTIDE SEQUENCE [GENOMIC DNA]</scope>
</reference>
<protein>
    <recommendedName>
        <fullName>Archaerhodopsin-3</fullName>
        <shortName>AR 3</shortName>
    </recommendedName>
</protein>
<keyword id="KW-0002">3D-structure</keyword>
<keyword id="KW-1003">Cell membrane</keyword>
<keyword id="KW-0157">Chromophore</keyword>
<keyword id="KW-0375">Hydrogen ion transport</keyword>
<keyword id="KW-0406">Ion transport</keyword>
<keyword id="KW-0472">Membrane</keyword>
<keyword id="KW-0600">Photoreceptor protein</keyword>
<keyword id="KW-0873">Pyrrolidone carboxylic acid</keyword>
<keyword id="KW-0675">Receptor</keyword>
<keyword id="KW-0681">Retinal protein</keyword>
<keyword id="KW-0716">Sensory transduction</keyword>
<keyword id="KW-0812">Transmembrane</keyword>
<keyword id="KW-1133">Transmembrane helix</keyword>
<keyword id="KW-0813">Transport</keyword>
<gene>
    <name type="primary">aop3</name>
</gene>
<dbReference type="EMBL" id="D50848">
    <property type="protein sequence ID" value="BAA09452.1"/>
    <property type="molecule type" value="Genomic_DNA"/>
</dbReference>
<dbReference type="PIR" id="T50676">
    <property type="entry name" value="T50676"/>
</dbReference>
<dbReference type="PDB" id="6GUX">
    <property type="method" value="X-ray"/>
    <property type="resolution" value="1.30 A"/>
    <property type="chains" value="A=7-247"/>
</dbReference>
<dbReference type="PDB" id="6GUY">
    <property type="method" value="X-ray"/>
    <property type="resolution" value="2.20 A"/>
    <property type="chains" value="A=7-247"/>
</dbReference>
<dbReference type="PDB" id="6GUZ">
    <property type="method" value="X-ray"/>
    <property type="resolution" value="1.90 A"/>
    <property type="chains" value="A=8-247"/>
</dbReference>
<dbReference type="PDB" id="6S63">
    <property type="method" value="X-ray"/>
    <property type="resolution" value="1.85 A"/>
    <property type="chains" value="A=7-247"/>
</dbReference>
<dbReference type="PDB" id="6S6C">
    <property type="method" value="X-ray"/>
    <property type="resolution" value="1.07 A"/>
    <property type="chains" value="A=7-247"/>
</dbReference>
<dbReference type="PDB" id="7ZY3">
    <property type="method" value="X-ray"/>
    <property type="resolution" value="1.80 A"/>
    <property type="chains" value="A=7-258"/>
</dbReference>
<dbReference type="PDBsum" id="6GUX"/>
<dbReference type="PDBsum" id="6GUY"/>
<dbReference type="PDBsum" id="6GUZ"/>
<dbReference type="PDBsum" id="6S63"/>
<dbReference type="PDBsum" id="6S6C"/>
<dbReference type="PDBsum" id="7ZY3"/>
<dbReference type="SMR" id="P96787"/>
<dbReference type="STRING" id="35743.SAMN04487937_1688"/>
<dbReference type="TCDB" id="3.E.1.1.4">
    <property type="family name" value="the ion-translocating microbial rhodopsin (mr) family"/>
</dbReference>
<dbReference type="OrthoDB" id="186433at2157"/>
<dbReference type="GO" id="GO:0005886">
    <property type="term" value="C:plasma membrane"/>
    <property type="evidence" value="ECO:0007669"/>
    <property type="project" value="UniProtKB-SubCell"/>
</dbReference>
<dbReference type="GO" id="GO:0005216">
    <property type="term" value="F:monoatomic ion channel activity"/>
    <property type="evidence" value="ECO:0007669"/>
    <property type="project" value="InterPro"/>
</dbReference>
<dbReference type="GO" id="GO:0009881">
    <property type="term" value="F:photoreceptor activity"/>
    <property type="evidence" value="ECO:0007669"/>
    <property type="project" value="UniProtKB-KW"/>
</dbReference>
<dbReference type="GO" id="GO:0007602">
    <property type="term" value="P:phototransduction"/>
    <property type="evidence" value="ECO:0007669"/>
    <property type="project" value="UniProtKB-KW"/>
</dbReference>
<dbReference type="GO" id="GO:1902600">
    <property type="term" value="P:proton transmembrane transport"/>
    <property type="evidence" value="ECO:0007669"/>
    <property type="project" value="UniProtKB-KW"/>
</dbReference>
<dbReference type="CDD" id="cd15244">
    <property type="entry name" value="7tm_bacteriorhodopsin"/>
    <property type="match status" value="1"/>
</dbReference>
<dbReference type="Gene3D" id="1.20.1070.10">
    <property type="entry name" value="Rhodopsin 7-helix transmembrane proteins"/>
    <property type="match status" value="1"/>
</dbReference>
<dbReference type="InterPro" id="IPR001425">
    <property type="entry name" value="Arc/bac/fun_rhodopsins"/>
</dbReference>
<dbReference type="InterPro" id="IPR018229">
    <property type="entry name" value="Rhodopsin_retinal_BS"/>
</dbReference>
<dbReference type="PANTHER" id="PTHR28286">
    <property type="match status" value="1"/>
</dbReference>
<dbReference type="PANTHER" id="PTHR28286:SF2">
    <property type="entry name" value="BACTERIORHODOPSIN _OPSIN, NOPA (EUROFUNG)"/>
    <property type="match status" value="1"/>
</dbReference>
<dbReference type="Pfam" id="PF01036">
    <property type="entry name" value="Bac_rhodopsin"/>
    <property type="match status" value="1"/>
</dbReference>
<dbReference type="PRINTS" id="PR00251">
    <property type="entry name" value="BACTRLOPSIN"/>
</dbReference>
<dbReference type="SMART" id="SM01021">
    <property type="entry name" value="Bac_rhodopsin"/>
    <property type="match status" value="1"/>
</dbReference>
<dbReference type="SUPFAM" id="SSF81321">
    <property type="entry name" value="Family A G protein-coupled receptor-like"/>
    <property type="match status" value="1"/>
</dbReference>
<dbReference type="PROSITE" id="PS00950">
    <property type="entry name" value="BACTERIAL_OPSIN_1"/>
    <property type="match status" value="1"/>
</dbReference>
<dbReference type="PROSITE" id="PS00327">
    <property type="entry name" value="BACTERIAL_OPSIN_RET"/>
    <property type="match status" value="1"/>
</dbReference>
<feature type="propeptide" id="PRO_0000020254" evidence="1">
    <location>
        <begin position="1"/>
        <end position="6"/>
    </location>
</feature>
<feature type="chain" id="PRO_0000020255" description="Archaerhodopsin-3">
    <location>
        <begin position="7"/>
        <end position="258"/>
    </location>
</feature>
<feature type="topological domain" description="Extracellular" evidence="1">
    <location>
        <begin position="7"/>
        <end position="18"/>
    </location>
</feature>
<feature type="transmembrane region" description="Helical; Name=Helix A" evidence="1">
    <location>
        <begin position="19"/>
        <end position="40"/>
    </location>
</feature>
<feature type="topological domain" description="Cytoplasmic" evidence="1">
    <location>
        <begin position="41"/>
        <end position="49"/>
    </location>
</feature>
<feature type="transmembrane region" description="Helical; Name=Helix B" evidence="1">
    <location>
        <begin position="50"/>
        <end position="71"/>
    </location>
</feature>
<feature type="topological domain" description="Extracellular" evidence="1">
    <location>
        <begin position="72"/>
        <end position="89"/>
    </location>
</feature>
<feature type="transmembrane region" description="Helical; Name=Helix C" evidence="1">
    <location>
        <begin position="90"/>
        <end position="111"/>
    </location>
</feature>
<feature type="topological domain" description="Cytoplasmic" evidence="1">
    <location>
        <begin position="112"/>
        <end position="114"/>
    </location>
</feature>
<feature type="transmembrane region" description="Helical; Name=Helix D" evidence="1">
    <location>
        <begin position="115"/>
        <end position="137"/>
    </location>
</feature>
<feature type="topological domain" description="Extracellular" evidence="1">
    <location>
        <begin position="138"/>
        <end position="141"/>
    </location>
</feature>
<feature type="transmembrane region" description="Helical; Name=Helix E" evidence="1">
    <location>
        <begin position="142"/>
        <end position="170"/>
    </location>
</feature>
<feature type="topological domain" description="Cytoplasmic" evidence="1">
    <location>
        <begin position="171"/>
        <end position="173"/>
    </location>
</feature>
<feature type="transmembrane region" description="Helical; Name=Helix F" evidence="1">
    <location>
        <begin position="174"/>
        <end position="202"/>
    </location>
</feature>
<feature type="topological domain" description="Extracellular" evidence="1">
    <location>
        <begin position="203"/>
        <end position="210"/>
    </location>
</feature>
<feature type="transmembrane region" description="Helical; Name=Helix G" evidence="1">
    <location>
        <begin position="211"/>
        <end position="243"/>
    </location>
</feature>
<feature type="topological domain" description="Cytoplasmic" evidence="1">
    <location>
        <begin position="244"/>
        <end position="258"/>
    </location>
</feature>
<feature type="modified residue" description="Pyrrolidone carboxylic acid" evidence="1">
    <location>
        <position position="7"/>
    </location>
</feature>
<feature type="modified residue" description="N6-(retinylidene)lysine" evidence="1">
    <location>
        <position position="226"/>
    </location>
</feature>
<feature type="strand" evidence="3">
    <location>
        <begin position="14"/>
        <end position="16"/>
    </location>
</feature>
<feature type="helix" evidence="3">
    <location>
        <begin position="20"/>
        <end position="42"/>
    </location>
</feature>
<feature type="helix" evidence="3">
    <location>
        <begin position="47"/>
        <end position="72"/>
    </location>
</feature>
<feature type="turn" evidence="3">
    <location>
        <begin position="73"/>
        <end position="75"/>
    </location>
</feature>
<feature type="strand" evidence="3">
    <location>
        <begin position="76"/>
        <end position="81"/>
    </location>
</feature>
<feature type="strand" evidence="3">
    <location>
        <begin position="84"/>
        <end position="89"/>
    </location>
</feature>
<feature type="helix" evidence="3">
    <location>
        <begin position="90"/>
        <end position="111"/>
    </location>
</feature>
<feature type="helix" evidence="3">
    <location>
        <begin position="115"/>
        <end position="136"/>
    </location>
</feature>
<feature type="helix" evidence="3">
    <location>
        <begin position="141"/>
        <end position="163"/>
    </location>
</feature>
<feature type="helix" evidence="3">
    <location>
        <begin position="165"/>
        <end position="171"/>
    </location>
</feature>
<feature type="helix" evidence="3">
    <location>
        <begin position="175"/>
        <end position="201"/>
    </location>
</feature>
<feature type="turn" evidence="3">
    <location>
        <begin position="203"/>
        <end position="206"/>
    </location>
</feature>
<feature type="helix" evidence="3">
    <location>
        <begin position="211"/>
        <end position="234"/>
    </location>
</feature>
<feature type="helix" evidence="3">
    <location>
        <begin position="237"/>
        <end position="240"/>
    </location>
</feature>
<comment type="function">
    <text>Light-driven proton pump.</text>
</comment>
<comment type="subcellular location">
    <subcellularLocation>
        <location>Cell membrane</location>
        <topology>Multi-pass membrane protein</topology>
    </subcellularLocation>
</comment>
<comment type="similarity">
    <text evidence="2">Belongs to the archaeal/bacterial/fungal opsin family.</text>
</comment>